<gene>
    <name evidence="1" type="primary">rps12</name>
    <name type="ordered locus">Memar_2207</name>
</gene>
<reference key="1">
    <citation type="journal article" date="2009" name="Stand. Genomic Sci.">
        <title>Complete genome sequence of Methanoculleus marisnigri Romesser et al. 1981 type strain JR1.</title>
        <authorList>
            <person name="Anderson I.J."/>
            <person name="Sieprawska-Lupa M."/>
            <person name="Lapidus A."/>
            <person name="Nolan M."/>
            <person name="Copeland A."/>
            <person name="Glavina Del Rio T."/>
            <person name="Tice H."/>
            <person name="Dalin E."/>
            <person name="Barry K."/>
            <person name="Saunders E."/>
            <person name="Han C."/>
            <person name="Brettin T."/>
            <person name="Detter J.C."/>
            <person name="Bruce D."/>
            <person name="Mikhailova N."/>
            <person name="Pitluck S."/>
            <person name="Hauser L."/>
            <person name="Land M."/>
            <person name="Lucas S."/>
            <person name="Richardson P."/>
            <person name="Whitman W.B."/>
            <person name="Kyrpides N.C."/>
        </authorList>
    </citation>
    <scope>NUCLEOTIDE SEQUENCE [LARGE SCALE GENOMIC DNA]</scope>
    <source>
        <strain>ATCC 35101 / DSM 1498 / JR1</strain>
    </source>
</reference>
<accession>A3CXN0</accession>
<dbReference type="EMBL" id="CP000562">
    <property type="protein sequence ID" value="ABN58130.1"/>
    <property type="molecule type" value="Genomic_DNA"/>
</dbReference>
<dbReference type="RefSeq" id="WP_011845039.1">
    <property type="nucleotide sequence ID" value="NC_009051.1"/>
</dbReference>
<dbReference type="SMR" id="A3CXN0"/>
<dbReference type="STRING" id="368407.Memar_2207"/>
<dbReference type="KEGG" id="mem:Memar_2207"/>
<dbReference type="eggNOG" id="arCOG04255">
    <property type="taxonomic scope" value="Archaea"/>
</dbReference>
<dbReference type="HOGENOM" id="CLU_115574_0_1_2"/>
<dbReference type="OrthoDB" id="45154at2157"/>
<dbReference type="Proteomes" id="UP000002146">
    <property type="component" value="Chromosome"/>
</dbReference>
<dbReference type="GO" id="GO:0015935">
    <property type="term" value="C:small ribosomal subunit"/>
    <property type="evidence" value="ECO:0007669"/>
    <property type="project" value="InterPro"/>
</dbReference>
<dbReference type="GO" id="GO:0019843">
    <property type="term" value="F:rRNA binding"/>
    <property type="evidence" value="ECO:0007669"/>
    <property type="project" value="UniProtKB-UniRule"/>
</dbReference>
<dbReference type="GO" id="GO:0003735">
    <property type="term" value="F:structural constituent of ribosome"/>
    <property type="evidence" value="ECO:0007669"/>
    <property type="project" value="InterPro"/>
</dbReference>
<dbReference type="GO" id="GO:0006412">
    <property type="term" value="P:translation"/>
    <property type="evidence" value="ECO:0007669"/>
    <property type="project" value="UniProtKB-UniRule"/>
</dbReference>
<dbReference type="CDD" id="cd03367">
    <property type="entry name" value="Ribosomal_S23"/>
    <property type="match status" value="1"/>
</dbReference>
<dbReference type="FunFam" id="2.40.50.140:FF:000007">
    <property type="entry name" value="40S ribosomal protein S23"/>
    <property type="match status" value="1"/>
</dbReference>
<dbReference type="Gene3D" id="2.40.50.140">
    <property type="entry name" value="Nucleic acid-binding proteins"/>
    <property type="match status" value="1"/>
</dbReference>
<dbReference type="HAMAP" id="MF_00403_A">
    <property type="entry name" value="Ribosomal_uS12_A"/>
    <property type="match status" value="1"/>
</dbReference>
<dbReference type="InterPro" id="IPR012340">
    <property type="entry name" value="NA-bd_OB-fold"/>
</dbReference>
<dbReference type="InterPro" id="IPR006032">
    <property type="entry name" value="Ribosomal_uS12"/>
</dbReference>
<dbReference type="InterPro" id="IPR022863">
    <property type="entry name" value="Ribosomal_uS12_arc"/>
</dbReference>
<dbReference type="InterPro" id="IPR005680">
    <property type="entry name" value="Ribosomal_uS12_euk/arc"/>
</dbReference>
<dbReference type="NCBIfam" id="NF003254">
    <property type="entry name" value="PRK04211.1"/>
    <property type="match status" value="1"/>
</dbReference>
<dbReference type="NCBIfam" id="TIGR00982">
    <property type="entry name" value="uS12_E_A"/>
    <property type="match status" value="1"/>
</dbReference>
<dbReference type="PANTHER" id="PTHR11652">
    <property type="entry name" value="30S RIBOSOMAL PROTEIN S12 FAMILY MEMBER"/>
    <property type="match status" value="1"/>
</dbReference>
<dbReference type="Pfam" id="PF00164">
    <property type="entry name" value="Ribosom_S12_S23"/>
    <property type="match status" value="1"/>
</dbReference>
<dbReference type="PIRSF" id="PIRSF002133">
    <property type="entry name" value="Ribosomal_S12/S23"/>
    <property type="match status" value="1"/>
</dbReference>
<dbReference type="SUPFAM" id="SSF50249">
    <property type="entry name" value="Nucleic acid-binding proteins"/>
    <property type="match status" value="1"/>
</dbReference>
<dbReference type="PROSITE" id="PS00055">
    <property type="entry name" value="RIBOSOMAL_S12"/>
    <property type="match status" value="1"/>
</dbReference>
<protein>
    <recommendedName>
        <fullName evidence="1">Small ribosomal subunit protein uS12</fullName>
    </recommendedName>
    <alternativeName>
        <fullName evidence="2">30S ribosomal protein S12</fullName>
    </alternativeName>
</protein>
<feature type="chain" id="PRO_0000296049" description="Small ribosomal subunit protein uS12">
    <location>
        <begin position="1"/>
        <end position="142"/>
    </location>
</feature>
<proteinExistence type="inferred from homology"/>
<organism>
    <name type="scientific">Methanoculleus marisnigri (strain ATCC 35101 / DSM 1498 / JR1)</name>
    <dbReference type="NCBI Taxonomy" id="368407"/>
    <lineage>
        <taxon>Archaea</taxon>
        <taxon>Methanobacteriati</taxon>
        <taxon>Methanobacteriota</taxon>
        <taxon>Stenosarchaea group</taxon>
        <taxon>Methanomicrobia</taxon>
        <taxon>Methanomicrobiales</taxon>
        <taxon>Methanomicrobiaceae</taxon>
        <taxon>Methanoculleus</taxon>
    </lineage>
</organism>
<sequence>MGNGKFAARKLKRDANNNRWHDTGYARRQLGLDVKADPLEGAPQGRGIVLEKVGVEAKQPNSAIRKCVRVQLIKNGRQVTAFAVGDGAINFIDEHDEVEIEGIGGRLGRSKGDIPGVRFVVTKVNNVSLREMVTGRKEKPRR</sequence>
<keyword id="KW-0687">Ribonucleoprotein</keyword>
<keyword id="KW-0689">Ribosomal protein</keyword>
<keyword id="KW-0694">RNA-binding</keyword>
<keyword id="KW-0699">rRNA-binding</keyword>
<name>RS12_METMJ</name>
<evidence type="ECO:0000255" key="1">
    <source>
        <dbReference type="HAMAP-Rule" id="MF_00403"/>
    </source>
</evidence>
<evidence type="ECO:0000305" key="2"/>
<comment type="function">
    <text evidence="1">With S4 and S5 plays an important role in translational accuracy. Located at the interface of the 30S and 50S subunits.</text>
</comment>
<comment type="subunit">
    <text evidence="1">Part of the 30S ribosomal subunit.</text>
</comment>
<comment type="similarity">
    <text evidence="1">Belongs to the universal ribosomal protein uS12 family.</text>
</comment>